<gene>
    <name evidence="1" type="primary">hpt</name>
    <name type="ordered locus">Mmah_1740</name>
</gene>
<name>HPRT_METMS</name>
<proteinExistence type="inferred from homology"/>
<comment type="function">
    <text evidence="1">Catalyzes a salvage reaction resulting in the formation of IMP that is energically less costly than de novo synthesis.</text>
</comment>
<comment type="catalytic activity">
    <reaction evidence="1">
        <text>IMP + diphosphate = hypoxanthine + 5-phospho-alpha-D-ribose 1-diphosphate</text>
        <dbReference type="Rhea" id="RHEA:17973"/>
        <dbReference type="ChEBI" id="CHEBI:17368"/>
        <dbReference type="ChEBI" id="CHEBI:33019"/>
        <dbReference type="ChEBI" id="CHEBI:58017"/>
        <dbReference type="ChEBI" id="CHEBI:58053"/>
        <dbReference type="EC" id="2.4.2.8"/>
    </reaction>
</comment>
<comment type="catalytic activity">
    <reaction evidence="1">
        <text>GMP + diphosphate = guanine + 5-phospho-alpha-D-ribose 1-diphosphate</text>
        <dbReference type="Rhea" id="RHEA:25424"/>
        <dbReference type="ChEBI" id="CHEBI:16235"/>
        <dbReference type="ChEBI" id="CHEBI:33019"/>
        <dbReference type="ChEBI" id="CHEBI:58017"/>
        <dbReference type="ChEBI" id="CHEBI:58115"/>
        <dbReference type="EC" id="2.4.2.8"/>
    </reaction>
</comment>
<comment type="pathway">
    <text evidence="1">Purine metabolism; IMP biosynthesis via salvage pathway; IMP from hypoxanthine: step 1/1.</text>
</comment>
<comment type="subunit">
    <text evidence="1">Homodimer.</text>
</comment>
<comment type="subcellular location">
    <subcellularLocation>
        <location evidence="1">Cytoplasm</location>
    </subcellularLocation>
</comment>
<comment type="similarity">
    <text evidence="1">Belongs to the purine/pyrimidine phosphoribosyltransferase family. Archaeal HPRT subfamily.</text>
</comment>
<reference key="1">
    <citation type="submission" date="2010-03" db="EMBL/GenBank/DDBJ databases">
        <title>The complete genome of Methanohalophilus mahii DSM 5219.</title>
        <authorList>
            <consortium name="US DOE Joint Genome Institute (JGI-PGF)"/>
            <person name="Lucas S."/>
            <person name="Copeland A."/>
            <person name="Lapidus A."/>
            <person name="Glavina del Rio T."/>
            <person name="Dalin E."/>
            <person name="Tice H."/>
            <person name="Bruce D."/>
            <person name="Goodwin L."/>
            <person name="Pitluck S."/>
            <person name="Kyrpides N."/>
            <person name="Mavromatis K."/>
            <person name="Ivanova N."/>
            <person name="Lykidis A."/>
            <person name="Saunders E."/>
            <person name="Brettin T."/>
            <person name="Detter J.C."/>
            <person name="Han C."/>
            <person name="Land M."/>
            <person name="Hauser L."/>
            <person name="Markowitz V."/>
            <person name="Cheng J.-F."/>
            <person name="Hugenholtz P."/>
            <person name="Woyke T."/>
            <person name="Wu D."/>
            <person name="Spring S."/>
            <person name="Schneider S."/>
            <person name="Schroeder M."/>
            <person name="Klenk H.-P."/>
            <person name="Eisen J.A."/>
        </authorList>
    </citation>
    <scope>NUCLEOTIDE SEQUENCE [LARGE SCALE GENOMIC DNA]</scope>
    <source>
        <strain>ATCC 35705 / DSM 5219 / SLP</strain>
    </source>
</reference>
<feature type="chain" id="PRO_0000415476" description="Hypoxanthine/guanine phosphoribosyltransferase">
    <location>
        <begin position="1"/>
        <end position="190"/>
    </location>
</feature>
<dbReference type="EC" id="2.4.2.8" evidence="1"/>
<dbReference type="EMBL" id="CP001994">
    <property type="protein sequence ID" value="ADE37235.1"/>
    <property type="molecule type" value="Genomic_DNA"/>
</dbReference>
<dbReference type="RefSeq" id="WP_013038177.1">
    <property type="nucleotide sequence ID" value="NC_014002.1"/>
</dbReference>
<dbReference type="SMR" id="D5E7U7"/>
<dbReference type="STRING" id="547558.Mmah_1740"/>
<dbReference type="GeneID" id="8983922"/>
<dbReference type="KEGG" id="mmh:Mmah_1740"/>
<dbReference type="HOGENOM" id="CLU_126376_0_0_2"/>
<dbReference type="OrthoDB" id="8323at2157"/>
<dbReference type="UniPathway" id="UPA00591">
    <property type="reaction ID" value="UER00648"/>
</dbReference>
<dbReference type="Proteomes" id="UP000001059">
    <property type="component" value="Chromosome"/>
</dbReference>
<dbReference type="GO" id="GO:0005737">
    <property type="term" value="C:cytoplasm"/>
    <property type="evidence" value="ECO:0007669"/>
    <property type="project" value="UniProtKB-SubCell"/>
</dbReference>
<dbReference type="GO" id="GO:0052657">
    <property type="term" value="F:guanine phosphoribosyltransferase activity"/>
    <property type="evidence" value="ECO:0007669"/>
    <property type="project" value="RHEA"/>
</dbReference>
<dbReference type="GO" id="GO:0004422">
    <property type="term" value="F:hypoxanthine phosphoribosyltransferase activity"/>
    <property type="evidence" value="ECO:0007669"/>
    <property type="project" value="UniProtKB-UniRule"/>
</dbReference>
<dbReference type="GO" id="GO:0032264">
    <property type="term" value="P:IMP salvage"/>
    <property type="evidence" value="ECO:0007669"/>
    <property type="project" value="UniProtKB-UniRule"/>
</dbReference>
<dbReference type="GO" id="GO:0006166">
    <property type="term" value="P:purine ribonucleoside salvage"/>
    <property type="evidence" value="ECO:0007669"/>
    <property type="project" value="UniProtKB-KW"/>
</dbReference>
<dbReference type="CDD" id="cd06223">
    <property type="entry name" value="PRTases_typeI"/>
    <property type="match status" value="1"/>
</dbReference>
<dbReference type="Gene3D" id="3.40.50.2020">
    <property type="match status" value="1"/>
</dbReference>
<dbReference type="HAMAP" id="MF_01467">
    <property type="entry name" value="Hypx_phosphoribosyltr"/>
    <property type="match status" value="1"/>
</dbReference>
<dbReference type="InterPro" id="IPR026597">
    <property type="entry name" value="HGPRTase-like"/>
</dbReference>
<dbReference type="InterPro" id="IPR000836">
    <property type="entry name" value="PRibTrfase_dom"/>
</dbReference>
<dbReference type="InterPro" id="IPR029057">
    <property type="entry name" value="PRTase-like"/>
</dbReference>
<dbReference type="InterPro" id="IPR050118">
    <property type="entry name" value="Pur/Pyrimidine_PRTase"/>
</dbReference>
<dbReference type="NCBIfam" id="NF040646">
    <property type="entry name" value="HPT_Archaea"/>
    <property type="match status" value="1"/>
</dbReference>
<dbReference type="NCBIfam" id="NF002635">
    <property type="entry name" value="PRK02304.1-4"/>
    <property type="match status" value="1"/>
</dbReference>
<dbReference type="PANTHER" id="PTHR43864">
    <property type="entry name" value="HYPOXANTHINE/GUANINE PHOSPHORIBOSYLTRANSFERASE"/>
    <property type="match status" value="1"/>
</dbReference>
<dbReference type="PANTHER" id="PTHR43864:SF1">
    <property type="entry name" value="XANTHINE PHOSPHORIBOSYLTRANSFERASE"/>
    <property type="match status" value="1"/>
</dbReference>
<dbReference type="Pfam" id="PF00156">
    <property type="entry name" value="Pribosyltran"/>
    <property type="match status" value="1"/>
</dbReference>
<dbReference type="SUPFAM" id="SSF53271">
    <property type="entry name" value="PRTase-like"/>
    <property type="match status" value="1"/>
</dbReference>
<dbReference type="PROSITE" id="PS00103">
    <property type="entry name" value="PUR_PYR_PR_TRANSFER"/>
    <property type="match status" value="1"/>
</dbReference>
<organism>
    <name type="scientific">Methanohalophilus mahii (strain ATCC 35705 / DSM 5219 / SLP)</name>
    <dbReference type="NCBI Taxonomy" id="547558"/>
    <lineage>
        <taxon>Archaea</taxon>
        <taxon>Methanobacteriati</taxon>
        <taxon>Methanobacteriota</taxon>
        <taxon>Stenosarchaea group</taxon>
        <taxon>Methanomicrobia</taxon>
        <taxon>Methanosarcinales</taxon>
        <taxon>Methanosarcinaceae</taxon>
        <taxon>Methanohalophilus</taxon>
    </lineage>
</organism>
<evidence type="ECO:0000255" key="1">
    <source>
        <dbReference type="HAMAP-Rule" id="MF_01467"/>
    </source>
</evidence>
<protein>
    <recommendedName>
        <fullName evidence="1">Hypoxanthine/guanine phosphoribosyltransferase</fullName>
        <shortName evidence="1">HGPRTase</shortName>
        <ecNumber evidence="1">2.4.2.8</ecNumber>
    </recommendedName>
</protein>
<sequence length="190" mass="20772">MLEILKKSLKKAPIVKRGKYPYFIHPITDGVPAIDPKLLDEISDYIIEYSDMDVDRILSIEAMGIPLATAISLKTGIPFSIVRKRQYQLPGEIKISQSTGYSKGELYINGIEKGNRILLVDDVISTGGTLRFLVKALEEKGVTISDIIVIVGRGDGVQQLAGEGIRVKTLVDINVSEDGVSILEDTGETN</sequence>
<keyword id="KW-0963">Cytoplasm</keyword>
<keyword id="KW-0328">Glycosyltransferase</keyword>
<keyword id="KW-0660">Purine salvage</keyword>
<keyword id="KW-1185">Reference proteome</keyword>
<keyword id="KW-0808">Transferase</keyword>
<accession>D5E7U7</accession>